<name>ADRHT_FUSOC</name>
<dbReference type="EC" id="3.2.1.-" evidence="5"/>
<dbReference type="EC" id="2.4.2.-" evidence="2"/>
<dbReference type="EMBL" id="SRMI01000008">
    <property type="protein sequence ID" value="TVY64815.1"/>
    <property type="molecule type" value="Genomic_DNA"/>
</dbReference>
<dbReference type="EMBL" id="OR133608">
    <property type="protein sequence ID" value="WZU87063.1"/>
    <property type="molecule type" value="Genomic_DNA"/>
</dbReference>
<dbReference type="PDB" id="8RSN">
    <property type="method" value="X-ray"/>
    <property type="resolution" value="2.22 A"/>
    <property type="chains" value="A/B=1-597"/>
</dbReference>
<dbReference type="PDBsum" id="8RSN"/>
<dbReference type="SMR" id="A0A559KX76"/>
<dbReference type="Proteomes" id="UP000320707">
    <property type="component" value="Unassembled WGS sequence"/>
</dbReference>
<dbReference type="GO" id="GO:0016798">
    <property type="term" value="F:hydrolase activity, acting on glycosyl bonds"/>
    <property type="evidence" value="ECO:0007669"/>
    <property type="project" value="UniProtKB-KW"/>
</dbReference>
<dbReference type="GO" id="GO:0046872">
    <property type="term" value="F:metal ion binding"/>
    <property type="evidence" value="ECO:0007669"/>
    <property type="project" value="UniProtKB-KW"/>
</dbReference>
<dbReference type="GO" id="GO:0004721">
    <property type="term" value="F:phosphoprotein phosphatase activity"/>
    <property type="evidence" value="ECO:0007669"/>
    <property type="project" value="UniProtKB-KW"/>
</dbReference>
<dbReference type="Gene3D" id="3.40.220.10">
    <property type="entry name" value="Leucine Aminopeptidase, subunit E, domain 1"/>
    <property type="match status" value="1"/>
</dbReference>
<dbReference type="Gene3D" id="3.30.1600.10">
    <property type="entry name" value="SIR2/SIRT2 'Small Domain"/>
    <property type="match status" value="1"/>
</dbReference>
<dbReference type="Gene3D" id="3.40.50.1220">
    <property type="entry name" value="TPP-binding domain"/>
    <property type="match status" value="1"/>
</dbReference>
<dbReference type="InterPro" id="IPR029035">
    <property type="entry name" value="DHS-like_NAD/FAD-binding_dom"/>
</dbReference>
<dbReference type="InterPro" id="IPR002589">
    <property type="entry name" value="Macro_dom"/>
</dbReference>
<dbReference type="InterPro" id="IPR043472">
    <property type="entry name" value="Macro_dom-like"/>
</dbReference>
<dbReference type="InterPro" id="IPR026591">
    <property type="entry name" value="Sirtuin_cat_small_dom_sf"/>
</dbReference>
<dbReference type="InterPro" id="IPR026590">
    <property type="entry name" value="Ssirtuin_cat_dom"/>
</dbReference>
<dbReference type="PANTHER" id="PTHR11106:SF121">
    <property type="entry name" value="ADP-RIBOSE 1''-PHOSPHATE PHOSPHATASE"/>
    <property type="match status" value="1"/>
</dbReference>
<dbReference type="PANTHER" id="PTHR11106">
    <property type="entry name" value="GANGLIOSIDE INDUCED DIFFERENTIATION ASSOCIATED PROTEIN 2-RELATED"/>
    <property type="match status" value="1"/>
</dbReference>
<dbReference type="Pfam" id="PF01661">
    <property type="entry name" value="Macro"/>
    <property type="match status" value="1"/>
</dbReference>
<dbReference type="SMART" id="SM00506">
    <property type="entry name" value="A1pp"/>
    <property type="match status" value="1"/>
</dbReference>
<dbReference type="SUPFAM" id="SSF52467">
    <property type="entry name" value="DHS-like NAD/FAD-binding domain"/>
    <property type="match status" value="1"/>
</dbReference>
<dbReference type="SUPFAM" id="SSF52949">
    <property type="entry name" value="Macro domain-like"/>
    <property type="match status" value="1"/>
</dbReference>
<dbReference type="PROSITE" id="PS51154">
    <property type="entry name" value="MACRO"/>
    <property type="match status" value="1"/>
</dbReference>
<dbReference type="PROSITE" id="PS50305">
    <property type="entry name" value="SIRTUIN"/>
    <property type="match status" value="1"/>
</dbReference>
<reference evidence="9" key="1">
    <citation type="journal article" date="2019" name="Microbiol. Resour. Announc.">
        <title>High-Quality Draft Genome Sequence of Fusarium oxysporum f. sp. cubense Strain 160527, a Causal Agent of Panama Disease.</title>
        <authorList>
            <person name="Asai S."/>
            <person name="Ayukawa Y."/>
            <person name="Gan P."/>
            <person name="Masuda S."/>
            <person name="Komatsu K."/>
            <person name="Shirasu K."/>
            <person name="Arie T."/>
        </authorList>
    </citation>
    <scope>NUCLEOTIDE SEQUENCE [LARGE SCALE GENOMIC DNA]</scope>
    <source>
        <strain>race 1 / 160527</strain>
    </source>
</reference>
<reference evidence="11" key="2">
    <citation type="journal article" date="2024" name="J. Biol. Chem.">
        <title>Evolutionary and molecular basis of ADP-ribosylation reversal by zinc-dependent macrodomains.</title>
        <authorList>
            <person name="Ariza A."/>
            <person name="Liu Q."/>
            <person name="Cowieson N.P."/>
            <person name="Ahel I."/>
            <person name="Filippov D.V."/>
            <person name="Rack J.G.M."/>
        </authorList>
    </citation>
    <scope>NUCLEOTIDE SEQUENCE [GENOMIC DNA]</scope>
    <scope>X-RAY CRYSTALLOGRAPHY (2.22 ANGSTROMS) IN COMPLEX WITH ZN(2+)</scope>
    <scope>FUNCTION AS AN HYDROLASE</scope>
    <scope>CATALYTIC ACTIVITY</scope>
    <scope>COFACTOR</scope>
    <scope>SUBUNIT</scope>
    <scope>MUTAGENESIS OF CYS-61 AND HIS-144</scope>
    <source>
        <strain>race 1 / IMI 141109</strain>
    </source>
</reference>
<evidence type="ECO:0000250" key="1">
    <source>
        <dbReference type="UniProtKB" id="P0DN70"/>
    </source>
</evidence>
<evidence type="ECO:0000250" key="2">
    <source>
        <dbReference type="UniProtKB" id="P0DN71"/>
    </source>
</evidence>
<evidence type="ECO:0000255" key="3">
    <source>
        <dbReference type="PROSITE-ProRule" id="PRU00236"/>
    </source>
</evidence>
<evidence type="ECO:0000255" key="4">
    <source>
        <dbReference type="PROSITE-ProRule" id="PRU00490"/>
    </source>
</evidence>
<evidence type="ECO:0000269" key="5">
    <source>
    </source>
</evidence>
<evidence type="ECO:0000303" key="6">
    <source>
    </source>
</evidence>
<evidence type="ECO:0000305" key="7"/>
<evidence type="ECO:0000305" key="8">
    <source>
    </source>
</evidence>
<evidence type="ECO:0000312" key="9">
    <source>
        <dbReference type="EMBL" id="TVY64815.1"/>
    </source>
</evidence>
<evidence type="ECO:0000312" key="10">
    <source>
        <dbReference type="EMBL" id="WZU87063.1"/>
    </source>
</evidence>
<evidence type="ECO:0007744" key="11">
    <source>
        <dbReference type="PDB" id="8RSN"/>
    </source>
</evidence>
<protein>
    <recommendedName>
        <fullName evidence="7">Probable bifunctional ADP-ribose hydrolase/ADP-ribosyltransferase</fullName>
    </recommendedName>
    <alternativeName>
        <fullName evidence="6">Foc1Mfs1</fullName>
    </alternativeName>
    <alternativeName>
        <fullName evidence="10">Macrodomain-fused SirTM 1</fullName>
    </alternativeName>
    <domain>
        <recommendedName>
            <fullName evidence="7">Protein-ADP-ribose hydrolase</fullName>
            <ecNumber evidence="5">3.2.1.-</ecNumber>
        </recommendedName>
    </domain>
    <domain>
        <recommendedName>
            <fullName evidence="7">Probable protein ADP-ribosyltransferase</fullName>
            <ecNumber evidence="2">2.4.2.-</ecNumber>
        </recommendedName>
    </domain>
</protein>
<feature type="chain" id="PRO_0000462490" description="Probable bifunctional ADP-ribose hydrolase/ADP-ribosyltransferase">
    <location>
        <begin position="1"/>
        <end position="597"/>
    </location>
</feature>
<feature type="domain" description="Macro" evidence="4">
    <location>
        <begin position="99"/>
        <end position="299"/>
    </location>
</feature>
<feature type="domain" description="Deacetylase sirtuin-type" evidence="3">
    <location>
        <begin position="307"/>
        <end position="597"/>
    </location>
</feature>
<feature type="binding site" evidence="1">
    <location>
        <position position="118"/>
    </location>
    <ligand>
        <name>ADP-D-ribose</name>
        <dbReference type="ChEBI" id="CHEBI:57967"/>
    </ligand>
</feature>
<feature type="binding site" evidence="1">
    <location>
        <position position="119"/>
    </location>
    <ligand>
        <name>ADP-D-ribose</name>
        <dbReference type="ChEBI" id="CHEBI:57967"/>
    </ligand>
</feature>
<feature type="binding site" evidence="1">
    <location>
        <position position="133"/>
    </location>
    <ligand>
        <name>ADP-D-ribose</name>
        <dbReference type="ChEBI" id="CHEBI:57967"/>
    </ligand>
</feature>
<feature type="binding site" evidence="1">
    <location>
        <position position="139"/>
    </location>
    <ligand>
        <name>Zn(2+)</name>
        <dbReference type="ChEBI" id="CHEBI:29105"/>
        <label>1</label>
    </ligand>
</feature>
<feature type="binding site" evidence="1">
    <location>
        <position position="144"/>
    </location>
    <ligand>
        <name>Zn(2+)</name>
        <dbReference type="ChEBI" id="CHEBI:29105"/>
        <label>1</label>
    </ligand>
</feature>
<feature type="binding site" evidence="1">
    <location>
        <position position="146"/>
    </location>
    <ligand>
        <name>ADP-D-ribose</name>
        <dbReference type="ChEBI" id="CHEBI:57967"/>
    </ligand>
</feature>
<feature type="binding site" evidence="1">
    <location>
        <position position="146"/>
    </location>
    <ligand>
        <name>Zn(2+)</name>
        <dbReference type="ChEBI" id="CHEBI:29105"/>
        <label>1</label>
    </ligand>
</feature>
<feature type="binding site" evidence="1">
    <location>
        <position position="147"/>
    </location>
    <ligand>
        <name>ADP-D-ribose</name>
        <dbReference type="ChEBI" id="CHEBI:57967"/>
    </ligand>
</feature>
<feature type="binding site" evidence="1">
    <location>
        <position position="148"/>
    </location>
    <ligand>
        <name>ADP-D-ribose</name>
        <dbReference type="ChEBI" id="CHEBI:57967"/>
    </ligand>
</feature>
<feature type="binding site" evidence="1">
    <location>
        <position position="244"/>
    </location>
    <ligand>
        <name>ADP-D-ribose</name>
        <dbReference type="ChEBI" id="CHEBI:57967"/>
    </ligand>
</feature>
<feature type="binding site" evidence="1">
    <location>
        <position position="245"/>
    </location>
    <ligand>
        <name>ADP-D-ribose</name>
        <dbReference type="ChEBI" id="CHEBI:57967"/>
    </ligand>
</feature>
<feature type="binding site" evidence="1">
    <location>
        <position position="246"/>
    </location>
    <ligand>
        <name>ADP-D-ribose</name>
        <dbReference type="ChEBI" id="CHEBI:57967"/>
    </ligand>
</feature>
<feature type="binding site" evidence="1">
    <location>
        <position position="248"/>
    </location>
    <ligand>
        <name>ADP-D-ribose</name>
        <dbReference type="ChEBI" id="CHEBI:57967"/>
    </ligand>
</feature>
<feature type="binding site" evidence="2">
    <location>
        <position position="333"/>
    </location>
    <ligand>
        <name>NAD(+)</name>
        <dbReference type="ChEBI" id="CHEBI:57540"/>
    </ligand>
</feature>
<feature type="binding site" evidence="2">
    <location>
        <begin position="418"/>
        <end position="421"/>
    </location>
    <ligand>
        <name>NAD(+)</name>
        <dbReference type="ChEBI" id="CHEBI:57540"/>
    </ligand>
</feature>
<feature type="binding site" evidence="2">
    <location>
        <position position="438"/>
    </location>
    <ligand>
        <name>NAD(+)</name>
        <dbReference type="ChEBI" id="CHEBI:57540"/>
    </ligand>
</feature>
<feature type="binding site" evidence="5 11">
    <location>
        <position position="446"/>
    </location>
    <ligand>
        <name>Zn(2+)</name>
        <dbReference type="ChEBI" id="CHEBI:29105"/>
        <label>2</label>
    </ligand>
</feature>
<feature type="binding site" evidence="5 11">
    <location>
        <position position="450"/>
    </location>
    <ligand>
        <name>Zn(2+)</name>
        <dbReference type="ChEBI" id="CHEBI:29105"/>
        <label>2</label>
    </ligand>
</feature>
<feature type="binding site" evidence="5 11">
    <location>
        <position position="485"/>
    </location>
    <ligand>
        <name>Zn(2+)</name>
        <dbReference type="ChEBI" id="CHEBI:29105"/>
        <label>2</label>
    </ligand>
</feature>
<feature type="binding site" evidence="5 11">
    <location>
        <position position="488"/>
    </location>
    <ligand>
        <name>Zn(2+)</name>
        <dbReference type="ChEBI" id="CHEBI:29105"/>
        <label>2</label>
    </ligand>
</feature>
<feature type="binding site" evidence="2">
    <location>
        <position position="584"/>
    </location>
    <ligand>
        <name>NAD(+)</name>
        <dbReference type="ChEBI" id="CHEBI:57540"/>
    </ligand>
</feature>
<feature type="mutagenesis site" description="Loss of hydrolase activity with PARP1 E988Q as substrate. Loss of zinc binding." evidence="5">
    <original>C</original>
    <variation>N</variation>
    <location>
        <position position="61"/>
    </location>
</feature>
<feature type="mutagenesis site" description="Loss of hydrolase activity with PARP1 E988Q as substrate. Loss of zinc binding." evidence="5">
    <original>H</original>
    <variation>Y</variation>
    <location>
        <position position="144"/>
    </location>
</feature>
<feature type="sequence conflict" description="In Ref. 2; WZU87063." evidence="7" ref="2">
    <original>I</original>
    <variation>T</variation>
    <location>
        <position position="401"/>
    </location>
</feature>
<accession>A0A559KX76</accession>
<sequence length="597" mass="66047">MRTTLTGTASVLDTTLTRLIDDVIENGSSFLADDENLQHYKQHLSHLETASKIALLRECLCVRPPLPLLPEDLLQNVDSILTRVRQHKILTPIFSLSPSRLIKHGDLGATRIHLWRGDITTLTGVTAITNAANSQGLGCFQPTHRCIDNIIHAEAGPRLREECFQRMQARGKELEPGEVLVTEGHALFASSVMHTVGPQLKRGASPTETERRQLAKCYESILEALELLPSDEDGSKSIALCCISTGLFAFPADEAAEIAVSTVTSWLQKHPSTTITDVIFNTFTQSDTEFYSKLLGPSHTKSISPVENTPQGSLSLAREWLSSADAVLVTAGAGLSAAEGLDYHSRDLFKRNFPGCLKFGLTSLYSVFGFNDWPSEEHRWGYFFTHLNMVANWSNTPTYQILIPWLRNFGQDAFVRTSNADGLFLANGWPKEQLSTPQGSYGYLQCLNNCRVDAVVPSAPLVADAMPHIDKATQKLMDPSKIPLCRFCGSKMSICVRAGSWFNQAPYQEGEAQWKAWKSRVLREKKNLVILELGVGMNTPGVLRWPNEDLVMRSDGRVKLIRVGMGPEAMVPWEQEDEGLSTCVQGDIGRAIPLLLE</sequence>
<proteinExistence type="evidence at protein level"/>
<comment type="function">
    <text evidence="5 7">Is probably a bifunctional enzyme with ADP-ribosyltransferase and ADP-ribosylhydrolase activities (Probable). In vitro, can act as an ADP-ribosylhydrolase that hydrolyzes ADP-ribosyl-glutamate bonds (PubMed:39270823). It can remove the ADP-ribosyl modification from the human mono-ADP-ribosylated PARP1 E988Q mutant, which is primarily modified on glutamate site with only minor aspartate contribution (PubMed:39270823). It cannot hydrolyze the ADP-ribosyl-arpartate bond in ribosylated S.pyogenes GcvH-L (PubMed:39270823).</text>
</comment>
<comment type="catalytic activity">
    <reaction evidence="5">
        <text>5-O-(ADP-D-ribosyl)-L-glutamyl-[protein] + H2O = L-glutamyl-[protein] + ADP-D-ribose + H(+)</text>
        <dbReference type="Rhea" id="RHEA:58248"/>
        <dbReference type="Rhea" id="RHEA-COMP:10208"/>
        <dbReference type="Rhea" id="RHEA-COMP:15089"/>
        <dbReference type="ChEBI" id="CHEBI:15377"/>
        <dbReference type="ChEBI" id="CHEBI:15378"/>
        <dbReference type="ChEBI" id="CHEBI:29973"/>
        <dbReference type="ChEBI" id="CHEBI:57967"/>
        <dbReference type="ChEBI" id="CHEBI:142540"/>
    </reaction>
</comment>
<comment type="cofactor">
    <cofactor evidence="5">
        <name>Zn(2+)</name>
        <dbReference type="ChEBI" id="CHEBI:29105"/>
    </cofactor>
    <text evidence="8">Binds 2 Zn(2+) ions per subunit.</text>
</comment>
<comment type="subunit">
    <text evidence="5">Monomer.</text>
</comment>
<comment type="similarity">
    <text evidence="8">In the N-terminal section; belongs to the MacroD-type family. Zn-Macro subfamily.</text>
</comment>
<comment type="similarity">
    <text evidence="7">In the C-terminal section; belongs to the sirtuin family. Class M subfamily.</text>
</comment>
<organism>
    <name type="scientific">Fusarium oxysporum f. sp. cubense</name>
    <dbReference type="NCBI Taxonomy" id="61366"/>
    <lineage>
        <taxon>Eukaryota</taxon>
        <taxon>Fungi</taxon>
        <taxon>Dikarya</taxon>
        <taxon>Ascomycota</taxon>
        <taxon>Pezizomycotina</taxon>
        <taxon>Sordariomycetes</taxon>
        <taxon>Hypocreomycetidae</taxon>
        <taxon>Hypocreales</taxon>
        <taxon>Nectriaceae</taxon>
        <taxon>Fusarium</taxon>
        <taxon>Fusarium oxysporum species complex</taxon>
    </lineage>
</organism>
<gene>
    <name evidence="10" type="primary">mfs1</name>
    <name evidence="9" type="ORF">Focb16_v015632</name>
</gene>
<keyword id="KW-0002">3D-structure</keyword>
<keyword id="KW-0326">Glycosidase</keyword>
<keyword id="KW-0328">Glycosyltransferase</keyword>
<keyword id="KW-0378">Hydrolase</keyword>
<keyword id="KW-0479">Metal-binding</keyword>
<keyword id="KW-0520">NAD</keyword>
<keyword id="KW-0548">Nucleotidyltransferase</keyword>
<keyword id="KW-0808">Transferase</keyword>
<keyword id="KW-0862">Zinc</keyword>